<dbReference type="EC" id="5.3.3.12" evidence="2"/>
<dbReference type="EMBL" id="D17547">
    <property type="protein sequence ID" value="BAA04484.1"/>
    <property type="molecule type" value="mRNA"/>
</dbReference>
<dbReference type="EMBL" id="L18967">
    <property type="protein sequence ID" value="AAA20870.1"/>
    <property type="molecule type" value="mRNA"/>
</dbReference>
<dbReference type="EMBL" id="S69231">
    <property type="protein sequence ID" value="AAC60627.1"/>
    <property type="molecule type" value="mRNA"/>
</dbReference>
<dbReference type="EMBL" id="DQ902581">
    <property type="protein sequence ID" value="ABI73976.1"/>
    <property type="molecule type" value="mRNA"/>
</dbReference>
<dbReference type="EMBL" id="AL139318">
    <property type="status" value="NOT_ANNOTATED_CDS"/>
    <property type="molecule type" value="Genomic_DNA"/>
</dbReference>
<dbReference type="EMBL" id="BC028311">
    <property type="protein sequence ID" value="AAH28311.1"/>
    <property type="molecule type" value="mRNA"/>
</dbReference>
<dbReference type="EMBL" id="L38953">
    <property type="protein sequence ID" value="AAC41925.1"/>
    <property type="molecule type" value="Genomic_DNA"/>
</dbReference>
<dbReference type="EMBL" id="D28767">
    <property type="protein sequence ID" value="BAA05956.1"/>
    <property type="molecule type" value="Genomic_DNA"/>
</dbReference>
<dbReference type="CCDS" id="CCDS45060.1">
    <molecule id="P40126-2"/>
</dbReference>
<dbReference type="CCDS" id="CCDS9470.1">
    <molecule id="P40126-1"/>
</dbReference>
<dbReference type="PIR" id="S43510">
    <property type="entry name" value="YRHUR2"/>
</dbReference>
<dbReference type="RefSeq" id="NP_001123361.1">
    <molecule id="P40126-2"/>
    <property type="nucleotide sequence ID" value="NM_001129889.3"/>
</dbReference>
<dbReference type="RefSeq" id="NP_001913.2">
    <molecule id="P40126-1"/>
    <property type="nucleotide sequence ID" value="NM_001922.4"/>
</dbReference>
<dbReference type="PDB" id="4HX1">
    <property type="method" value="X-ray"/>
    <property type="resolution" value="1.80 A"/>
    <property type="chains" value="C=180-188"/>
</dbReference>
<dbReference type="PDBsum" id="4HX1"/>
<dbReference type="SMR" id="P40126"/>
<dbReference type="BioGRID" id="108006">
    <property type="interactions" value="30"/>
</dbReference>
<dbReference type="CORUM" id="P40126"/>
<dbReference type="FunCoup" id="P40126">
    <property type="interactions" value="154"/>
</dbReference>
<dbReference type="IntAct" id="P40126">
    <property type="interactions" value="17"/>
</dbReference>
<dbReference type="STRING" id="9606.ENSP00000392762"/>
<dbReference type="TCDB" id="9.B.423.1.3">
    <property type="family name" value="the tysrosinase (tyr) family"/>
</dbReference>
<dbReference type="GlyCosmos" id="P40126">
    <property type="glycosylation" value="6 sites, No reported glycans"/>
</dbReference>
<dbReference type="GlyGen" id="P40126">
    <property type="glycosylation" value="7 sites, 1 O-linked glycan (1 site)"/>
</dbReference>
<dbReference type="iPTMnet" id="P40126"/>
<dbReference type="PhosphoSitePlus" id="P40126"/>
<dbReference type="BioMuta" id="DCT"/>
<dbReference type="DMDM" id="731026"/>
<dbReference type="MassIVE" id="P40126"/>
<dbReference type="PaxDb" id="9606-ENSP00000392762"/>
<dbReference type="PeptideAtlas" id="P40126"/>
<dbReference type="ProteomicsDB" id="55335">
    <molecule id="P40126-1"/>
</dbReference>
<dbReference type="ProteomicsDB" id="55336">
    <molecule id="P40126-2"/>
</dbReference>
<dbReference type="Antibodypedia" id="2252">
    <property type="antibodies" value="415 antibodies from 34 providers"/>
</dbReference>
<dbReference type="DNASU" id="1638"/>
<dbReference type="Ensembl" id="ENST00000377028.10">
    <molecule id="P40126-1"/>
    <property type="protein sequence ID" value="ENSP00000366227.4"/>
    <property type="gene ID" value="ENSG00000080166.16"/>
</dbReference>
<dbReference type="Ensembl" id="ENST00000446125.1">
    <molecule id="P40126-2"/>
    <property type="protein sequence ID" value="ENSP00000392762.1"/>
    <property type="gene ID" value="ENSG00000080166.16"/>
</dbReference>
<dbReference type="GeneID" id="1638"/>
<dbReference type="KEGG" id="hsa:1638"/>
<dbReference type="MANE-Select" id="ENST00000377028.10">
    <property type="protein sequence ID" value="ENSP00000366227.4"/>
    <property type="RefSeq nucleotide sequence ID" value="NM_001922.5"/>
    <property type="RefSeq protein sequence ID" value="NP_001913.2"/>
</dbReference>
<dbReference type="UCSC" id="uc001vlv.6">
    <molecule id="P40126-1"/>
    <property type="organism name" value="human"/>
</dbReference>
<dbReference type="AGR" id="HGNC:2709"/>
<dbReference type="CTD" id="1638"/>
<dbReference type="DisGeNET" id="1638"/>
<dbReference type="GeneCards" id="DCT"/>
<dbReference type="HGNC" id="HGNC:2709">
    <property type="gene designation" value="DCT"/>
</dbReference>
<dbReference type="HPA" id="ENSG00000080166">
    <property type="expression patterns" value="Tissue enriched (skin)"/>
</dbReference>
<dbReference type="MalaCards" id="DCT"/>
<dbReference type="MIM" id="191275">
    <property type="type" value="gene"/>
</dbReference>
<dbReference type="MIM" id="619165">
    <property type="type" value="phenotype"/>
</dbReference>
<dbReference type="neXtProt" id="NX_P40126"/>
<dbReference type="OpenTargets" id="ENSG00000080166"/>
<dbReference type="Orphanet" id="597733">
    <property type="disease" value="Oculocutaneous albinism type 8"/>
</dbReference>
<dbReference type="PharmGKB" id="PA27179"/>
<dbReference type="VEuPathDB" id="HostDB:ENSG00000080166"/>
<dbReference type="eggNOG" id="ENOG502QRNA">
    <property type="taxonomic scope" value="Eukaryota"/>
</dbReference>
<dbReference type="GeneTree" id="ENSGT00940000156856"/>
<dbReference type="HOGENOM" id="CLU_038693_1_0_1"/>
<dbReference type="InParanoid" id="P40126"/>
<dbReference type="OMA" id="FFNRTCK"/>
<dbReference type="OrthoDB" id="6132182at2759"/>
<dbReference type="PAN-GO" id="P40126">
    <property type="GO annotations" value="6 GO annotations based on evolutionary models"/>
</dbReference>
<dbReference type="PhylomeDB" id="P40126"/>
<dbReference type="TreeFam" id="TF315865"/>
<dbReference type="PathwayCommons" id="P40126"/>
<dbReference type="Reactome" id="R-HSA-5662702">
    <property type="pathway name" value="Melanin biosynthesis"/>
</dbReference>
<dbReference type="Reactome" id="R-HSA-9824585">
    <property type="pathway name" value="Regulation of MITF-M-dependent genes involved in pigmentation"/>
</dbReference>
<dbReference type="SignaLink" id="P40126"/>
<dbReference type="SIGNOR" id="P40126"/>
<dbReference type="UniPathway" id="UPA00785"/>
<dbReference type="BioGRID-ORCS" id="1638">
    <property type="hits" value="12 hits in 1152 CRISPR screens"/>
</dbReference>
<dbReference type="ChiTaRS" id="DCT">
    <property type="organism name" value="human"/>
</dbReference>
<dbReference type="EvolutionaryTrace" id="P40126"/>
<dbReference type="GeneWiki" id="Dopachrome_tautomerase"/>
<dbReference type="GenomeRNAi" id="1638"/>
<dbReference type="Pharos" id="P40126">
    <property type="development level" value="Tbio"/>
</dbReference>
<dbReference type="PRO" id="PR:P40126"/>
<dbReference type="Proteomes" id="UP000005640">
    <property type="component" value="Chromosome 13"/>
</dbReference>
<dbReference type="RNAct" id="P40126">
    <property type="molecule type" value="protein"/>
</dbReference>
<dbReference type="Bgee" id="ENSG00000080166">
    <property type="expression patterns" value="Expressed in upper leg skin and 126 other cell types or tissues"/>
</dbReference>
<dbReference type="ExpressionAtlas" id="P40126">
    <property type="expression patterns" value="baseline and differential"/>
</dbReference>
<dbReference type="GO" id="GO:0005829">
    <property type="term" value="C:cytosol"/>
    <property type="evidence" value="ECO:0000250"/>
    <property type="project" value="UniProtKB"/>
</dbReference>
<dbReference type="GO" id="GO:0043231">
    <property type="term" value="C:intracellular membrane-bounded organelle"/>
    <property type="evidence" value="ECO:0000314"/>
    <property type="project" value="HPA"/>
</dbReference>
<dbReference type="GO" id="GO:0042470">
    <property type="term" value="C:melanosome"/>
    <property type="evidence" value="ECO:0000250"/>
    <property type="project" value="UniProtKB"/>
</dbReference>
<dbReference type="GO" id="GO:0033162">
    <property type="term" value="C:melanosome membrane"/>
    <property type="evidence" value="ECO:0000304"/>
    <property type="project" value="Reactome"/>
</dbReference>
<dbReference type="GO" id="GO:0016020">
    <property type="term" value="C:membrane"/>
    <property type="evidence" value="ECO:0000304"/>
    <property type="project" value="ProtInc"/>
</dbReference>
<dbReference type="GO" id="GO:0005886">
    <property type="term" value="C:plasma membrane"/>
    <property type="evidence" value="ECO:0000314"/>
    <property type="project" value="HPA"/>
</dbReference>
<dbReference type="GO" id="GO:0005507">
    <property type="term" value="F:copper ion binding"/>
    <property type="evidence" value="ECO:0000304"/>
    <property type="project" value="ProtInc"/>
</dbReference>
<dbReference type="GO" id="GO:0004167">
    <property type="term" value="F:dopachrome isomerase activity"/>
    <property type="evidence" value="ECO:0000250"/>
    <property type="project" value="UniProtKB"/>
</dbReference>
<dbReference type="GO" id="GO:0016491">
    <property type="term" value="F:oxidoreductase activity"/>
    <property type="evidence" value="ECO:0007669"/>
    <property type="project" value="InterPro"/>
</dbReference>
<dbReference type="GO" id="GO:0048468">
    <property type="term" value="P:cell development"/>
    <property type="evidence" value="ECO:0007669"/>
    <property type="project" value="Ensembl"/>
</dbReference>
<dbReference type="GO" id="GO:0048066">
    <property type="term" value="P:developmental pigmentation"/>
    <property type="evidence" value="ECO:0000318"/>
    <property type="project" value="GO_Central"/>
</dbReference>
<dbReference type="GO" id="GO:0008544">
    <property type="term" value="P:epidermis development"/>
    <property type="evidence" value="ECO:0000304"/>
    <property type="project" value="ProtInc"/>
</dbReference>
<dbReference type="GO" id="GO:0006583">
    <property type="term" value="P:melanin biosynthetic process from tyrosine"/>
    <property type="evidence" value="ECO:0000250"/>
    <property type="project" value="UniProtKB"/>
</dbReference>
<dbReference type="GO" id="GO:0002052">
    <property type="term" value="P:positive regulation of neuroblast proliferation"/>
    <property type="evidence" value="ECO:0000318"/>
    <property type="project" value="GO_Central"/>
</dbReference>
<dbReference type="GO" id="GO:0009637">
    <property type="term" value="P:response to blue light"/>
    <property type="evidence" value="ECO:0000314"/>
    <property type="project" value="UniProtKB"/>
</dbReference>
<dbReference type="GO" id="GO:0021847">
    <property type="term" value="P:ventricular zone neuroblast division"/>
    <property type="evidence" value="ECO:0000318"/>
    <property type="project" value="GO_Central"/>
</dbReference>
<dbReference type="FunFam" id="1.10.1280.10:FF:000002">
    <property type="entry name" value="L-dopachrome tautomerase"/>
    <property type="match status" value="1"/>
</dbReference>
<dbReference type="Gene3D" id="1.10.1280.10">
    <property type="entry name" value="Di-copper center containing domain from catechol oxidase"/>
    <property type="match status" value="1"/>
</dbReference>
<dbReference type="InterPro" id="IPR008922">
    <property type="entry name" value="Di-copper_centre_dom_sf"/>
</dbReference>
<dbReference type="InterPro" id="IPR050316">
    <property type="entry name" value="Tyrosinase/Hemocyanin"/>
</dbReference>
<dbReference type="InterPro" id="IPR002227">
    <property type="entry name" value="Tyrosinase_Cu-bd"/>
</dbReference>
<dbReference type="PANTHER" id="PTHR11474:SF4">
    <property type="entry name" value="L-DOPACHROME TAUTOMERASE"/>
    <property type="match status" value="1"/>
</dbReference>
<dbReference type="PANTHER" id="PTHR11474">
    <property type="entry name" value="TYROSINASE FAMILY MEMBER"/>
    <property type="match status" value="1"/>
</dbReference>
<dbReference type="Pfam" id="PF00264">
    <property type="entry name" value="Tyrosinase"/>
    <property type="match status" value="1"/>
</dbReference>
<dbReference type="PRINTS" id="PR00092">
    <property type="entry name" value="TYROSINASE"/>
</dbReference>
<dbReference type="SUPFAM" id="SSF48056">
    <property type="entry name" value="Di-copper centre-containing domain"/>
    <property type="match status" value="1"/>
</dbReference>
<dbReference type="PROSITE" id="PS00497">
    <property type="entry name" value="TYROSINASE_1"/>
    <property type="match status" value="1"/>
</dbReference>
<dbReference type="PROSITE" id="PS00498">
    <property type="entry name" value="TYROSINASE_2"/>
    <property type="match status" value="1"/>
</dbReference>
<evidence type="ECO:0000250" key="1"/>
<evidence type="ECO:0000250" key="2">
    <source>
        <dbReference type="UniProtKB" id="P29812"/>
    </source>
</evidence>
<evidence type="ECO:0000255" key="3"/>
<evidence type="ECO:0000269" key="4">
    <source>
    </source>
</evidence>
<evidence type="ECO:0000269" key="5">
    <source>
    </source>
</evidence>
<evidence type="ECO:0000269" key="6">
    <source>
    </source>
</evidence>
<evidence type="ECO:0000269" key="7">
    <source>
    </source>
</evidence>
<evidence type="ECO:0000269" key="8">
    <source>
    </source>
</evidence>
<evidence type="ECO:0000303" key="9">
    <source>
    </source>
</evidence>
<evidence type="ECO:0000305" key="10"/>
<evidence type="ECO:0000312" key="11">
    <source>
        <dbReference type="HGNC" id="HGNC:2709"/>
    </source>
</evidence>
<gene>
    <name evidence="11" type="primary">DCT</name>
    <name type="synonym">TYRP2</name>
</gene>
<feature type="signal peptide" evidence="3">
    <location>
        <begin position="1"/>
        <end position="23"/>
    </location>
</feature>
<feature type="chain" id="PRO_0000035892" description="L-dopachrome tautomerase">
    <location>
        <begin position="24"/>
        <end position="519"/>
    </location>
</feature>
<feature type="topological domain" description="Lumenal, melanosome" evidence="3">
    <location>
        <begin position="24"/>
        <end position="472"/>
    </location>
</feature>
<feature type="transmembrane region" description="Helical" evidence="3">
    <location>
        <begin position="473"/>
        <end position="493"/>
    </location>
</feature>
<feature type="topological domain" description="Cytoplasmic" evidence="3">
    <location>
        <begin position="494"/>
        <end position="519"/>
    </location>
</feature>
<feature type="binding site" evidence="1">
    <location>
        <position position="189"/>
    </location>
    <ligand>
        <name>Zn(2+)</name>
        <dbReference type="ChEBI" id="CHEBI:29105"/>
        <label>A</label>
    </ligand>
</feature>
<feature type="binding site" evidence="1">
    <location>
        <position position="211"/>
    </location>
    <ligand>
        <name>Zn(2+)</name>
        <dbReference type="ChEBI" id="CHEBI:29105"/>
        <label>A</label>
    </ligand>
</feature>
<feature type="binding site" evidence="1">
    <location>
        <position position="220"/>
    </location>
    <ligand>
        <name>Zn(2+)</name>
        <dbReference type="ChEBI" id="CHEBI:29105"/>
        <label>A</label>
    </ligand>
</feature>
<feature type="binding site" evidence="1">
    <location>
        <position position="369"/>
    </location>
    <ligand>
        <name>Zn(2+)</name>
        <dbReference type="ChEBI" id="CHEBI:29105"/>
        <label>B</label>
    </ligand>
</feature>
<feature type="binding site" evidence="1">
    <location>
        <position position="373"/>
    </location>
    <ligand>
        <name>Zn(2+)</name>
        <dbReference type="ChEBI" id="CHEBI:29105"/>
        <label>B</label>
    </ligand>
</feature>
<feature type="binding site" evidence="1">
    <location>
        <position position="396"/>
    </location>
    <ligand>
        <name>Zn(2+)</name>
        <dbReference type="ChEBI" id="CHEBI:29105"/>
        <label>B</label>
    </ligand>
</feature>
<feature type="glycosylation site" description="N-linked (GlcNAc...) asparagine" evidence="3">
    <location>
        <position position="170"/>
    </location>
</feature>
<feature type="glycosylation site" description="N-linked (GlcNAc...) asparagine" evidence="3">
    <location>
        <position position="178"/>
    </location>
</feature>
<feature type="glycosylation site" description="N-linked (GlcNAc...) asparagine" evidence="3">
    <location>
        <position position="237"/>
    </location>
</feature>
<feature type="glycosylation site" description="N-linked (GlcNAc...) asparagine" evidence="3">
    <location>
        <position position="300"/>
    </location>
</feature>
<feature type="glycosylation site" description="N-linked (GlcNAc...) asparagine" evidence="3">
    <location>
        <position position="342"/>
    </location>
</feature>
<feature type="glycosylation site" description="N-linked (GlcNAc...) asparagine" evidence="3">
    <location>
        <position position="377"/>
    </location>
</feature>
<feature type="splice variant" id="VSP_043581" description="In isoform 2." evidence="9">
    <original>V</original>
    <variation>VVISNRLLYNATTNILEHVRKEKATKELPSLHVL</variation>
    <location>
        <position position="393"/>
    </location>
</feature>
<feature type="sequence variant" id="VAR_085343" description="In OCA8; dbSNP:rs370729240." evidence="7">
    <original>C</original>
    <variation>S</variation>
    <location>
        <position position="40"/>
    </location>
</feature>
<feature type="sequence variant" id="VAR_085344" description="In OCA8; dbSNP:rs1885297366." evidence="7">
    <original>C</original>
    <variation>W</variation>
    <location>
        <position position="61"/>
    </location>
</feature>
<comment type="function">
    <text evidence="7 8">Plays a role in melanin biosynthesis (PubMed:33100333). Catalyzes the conversion of L-dopachrome into 5,6-dihydroxyindole-2-carboxylic acid (DHICA).</text>
</comment>
<comment type="catalytic activity">
    <reaction evidence="2">
        <text>L-dopachrome = 5,6-dihydroxyindole-2-carboxylate</text>
        <dbReference type="Rhea" id="RHEA:13041"/>
        <dbReference type="ChEBI" id="CHEBI:16875"/>
        <dbReference type="ChEBI" id="CHEBI:57509"/>
        <dbReference type="EC" id="5.3.3.12"/>
    </reaction>
</comment>
<comment type="cofactor">
    <cofactor evidence="2">
        <name>Zn(2+)</name>
        <dbReference type="ChEBI" id="CHEBI:29105"/>
    </cofactor>
    <text evidence="2">Binds 2 Zn(2+) ions per subunit.</text>
</comment>
<comment type="pathway">
    <text evidence="7">Pigment biosynthesis; melanin biosynthesis.</text>
</comment>
<comment type="subunit">
    <text evidence="6">Forms an OPN3-dependent complex with TYR in response to blue light in melanocytes.</text>
</comment>
<comment type="interaction">
    <interactant intactId="EBI-18640065">
        <id>P40126</id>
    </interactant>
    <interactant intactId="EBI-12188331">
        <id>P60201-2</id>
        <label>PLP1</label>
    </interactant>
    <organismsDiffer>false</organismsDiffer>
    <experiments>3</experiments>
</comment>
<comment type="subcellular location">
    <subcellularLocation>
        <location evidence="4 5">Melanosome membrane</location>
        <topology evidence="4 5">Single-pass type I membrane protein</topology>
    </subcellularLocation>
    <subcellularLocation>
        <location evidence="2">Melanosome</location>
    </subcellularLocation>
    <text evidence="2">Proper trafficking to melanosome is regulated by SGSM2, ANKRD27, RAB9A, RAB32 and RAB38.</text>
</comment>
<comment type="alternative products">
    <event type="alternative splicing"/>
    <isoform>
        <id>P40126-1</id>
        <name>1</name>
        <sequence type="displayed"/>
    </isoform>
    <isoform>
        <id>P40126-2</id>
        <name>2</name>
        <name>TRP-2-6b</name>
        <sequence type="described" ref="VSP_043581"/>
    </isoform>
</comment>
<comment type="induction">
    <text evidence="6">Induced by blue light (415nm).</text>
</comment>
<comment type="PTM">
    <text evidence="2">Glycosylated.</text>
</comment>
<comment type="disease" evidence="7">
    <disease id="DI-06011">
        <name>Albinism, oculocutaneous, 8</name>
        <acronym>OCA8</acronym>
        <description>A form of oculocutaneous albinism, a disorder of pigmentation characterized by reduced biosynthesis of melanin in the skin, hair and eyes. OCA8 is an autosomal recessive form characterized by mild hair and skin hypopigmentation, associated with ocular features including nystagmus, reduced visual acuity, iris transillumination, and hypopigmentation of the retina.</description>
        <dbReference type="MIM" id="619165"/>
    </disease>
    <text>The disease is caused by variants affecting the gene represented in this entry.</text>
</comment>
<comment type="similarity">
    <text evidence="10">Belongs to the tyrosinase family.</text>
</comment>
<sequence>MSPLWWGFLLSCLGCKILPGAQGQFPRVCMTVDSLVNKECCPRLGAESANVCGSQQGRGQCTEVRADTRPWSGPYILRNQDDRELWPRKFFHRTCKCTGNFAGYNCGDCKFGWTGPNCERKKPPVIRQNIHSLSPQEREQFLGALDLAKKRVHPDYVITTQHWLGLLGPNGTQPQFANCSVYDFFVWLHYYSVRDTLLGPGRPYRAIDFSHQGPAFVTWHRYHLLCLERDLQRLIGNESFALPYWNFATGRNECDVCTDQLFGAARPDDPTLISRNSRFSSWETVCDSLDDYNHLVTLCNGTYEGLLRRNQMGRNSMKLPTLKDIRDCLSLQKFDNPPFFQNSTFSFRNALEGFDKADGTLDSQVMSLHNLVHSFLNGTNALPHSAANDPIFVVLHSFTDAIFDEWMKRFNPPADAWPQELAPIGHNRMYNMVPFFPPVTNEELFLTSDQLGYSYAIDLPVSVEETPGWPTTLLVVMGTLVALVGLFVLLAFLQYRRLRKGYTPLMETHLSSKRYTEEA</sequence>
<reference key="1">
    <citation type="journal article" date="1994" name="Biochim. Biophys. Acta">
        <title>Molecular cloning and functional analysis of a cDNA coding for human DOPAchrome tautomerase/tyrosinase-related protein-2.</title>
        <authorList>
            <person name="Yokoyama K."/>
            <person name="Suzuki H."/>
            <person name="Yasumoto K.I."/>
            <person name="Tomita Y."/>
            <person name="Shibahara S."/>
        </authorList>
    </citation>
    <scope>NUCLEOTIDE SEQUENCE [MRNA] (ISOFORM 1)</scope>
</reference>
<reference key="2">
    <citation type="journal article" date="1994" name="Gene">
        <title>Sequence of the human dopachrome tautomerase-encoding TRP-2 cDNA.</title>
        <authorList>
            <person name="Cassady J.L."/>
            <person name="Sturm R.A."/>
        </authorList>
    </citation>
    <scope>NUCLEOTIDE SEQUENCE [MRNA] (ISOFORM 1)</scope>
</reference>
<reference key="3">
    <citation type="journal article" date="1994" name="Eur. J. Biochem.">
        <title>Molecular characterization of a human tyrosinase-related-protein-2 cDNA. Patterns of expression in melanocytic cells.</title>
        <authorList>
            <person name="Bouchard B."/>
            <person name="del Marmol V."/>
            <person name="Jackson I.J."/>
            <person name="Cherif D."/>
            <person name="Dubertret L."/>
        </authorList>
    </citation>
    <scope>NUCLEOTIDE SEQUENCE [MRNA] (ISOFORM 1)</scope>
    <scope>FUNCTION</scope>
</reference>
<reference key="4">
    <citation type="journal article" date="2002" name="J. Immunol.">
        <title>Pre-existing immunity to tyrosinase-related protein (TRP)-2, a new TRP-2 isoform, and the NY-ESO-1 melanoma antigen in a patient with a dramatic response to immunotherapy.</title>
        <authorList>
            <person name="Khong H.T."/>
            <person name="Rosenberg S.A."/>
        </authorList>
    </citation>
    <scope>NUCLEOTIDE SEQUENCE [MRNA] (ISOFORM 2)</scope>
    <scope>ALTERNATIVE SPLICING</scope>
    <source>
        <tissue>Melanoma</tissue>
    </source>
</reference>
<reference key="5">
    <citation type="journal article" date="2004" name="Nature">
        <title>The DNA sequence and analysis of human chromosome 13.</title>
        <authorList>
            <person name="Dunham A."/>
            <person name="Matthews L.H."/>
            <person name="Burton J."/>
            <person name="Ashurst J.L."/>
            <person name="Howe K.L."/>
            <person name="Ashcroft K.J."/>
            <person name="Beare D.M."/>
            <person name="Burford D.C."/>
            <person name="Hunt S.E."/>
            <person name="Griffiths-Jones S."/>
            <person name="Jones M.C."/>
            <person name="Keenan S.J."/>
            <person name="Oliver K."/>
            <person name="Scott C.E."/>
            <person name="Ainscough R."/>
            <person name="Almeida J.P."/>
            <person name="Ambrose K.D."/>
            <person name="Andrews D.T."/>
            <person name="Ashwell R.I.S."/>
            <person name="Babbage A.K."/>
            <person name="Bagguley C.L."/>
            <person name="Bailey J."/>
            <person name="Bannerjee R."/>
            <person name="Barlow K.F."/>
            <person name="Bates K."/>
            <person name="Beasley H."/>
            <person name="Bird C.P."/>
            <person name="Bray-Allen S."/>
            <person name="Brown A.J."/>
            <person name="Brown J.Y."/>
            <person name="Burrill W."/>
            <person name="Carder C."/>
            <person name="Carter N.P."/>
            <person name="Chapman J.C."/>
            <person name="Clamp M.E."/>
            <person name="Clark S.Y."/>
            <person name="Clarke G."/>
            <person name="Clee C.M."/>
            <person name="Clegg S.C."/>
            <person name="Cobley V."/>
            <person name="Collins J.E."/>
            <person name="Corby N."/>
            <person name="Coville G.J."/>
            <person name="Deloukas P."/>
            <person name="Dhami P."/>
            <person name="Dunham I."/>
            <person name="Dunn M."/>
            <person name="Earthrowl M.E."/>
            <person name="Ellington A.G."/>
            <person name="Faulkner L."/>
            <person name="Frankish A.G."/>
            <person name="Frankland J."/>
            <person name="French L."/>
            <person name="Garner P."/>
            <person name="Garnett J."/>
            <person name="Gilbert J.G.R."/>
            <person name="Gilson C.J."/>
            <person name="Ghori J."/>
            <person name="Grafham D.V."/>
            <person name="Gribble S.M."/>
            <person name="Griffiths C."/>
            <person name="Hall R.E."/>
            <person name="Hammond S."/>
            <person name="Harley J.L."/>
            <person name="Hart E.A."/>
            <person name="Heath P.D."/>
            <person name="Howden P.J."/>
            <person name="Huckle E.J."/>
            <person name="Hunt P.J."/>
            <person name="Hunt A.R."/>
            <person name="Johnson C."/>
            <person name="Johnson D."/>
            <person name="Kay M."/>
            <person name="Kimberley A.M."/>
            <person name="King A."/>
            <person name="Laird G.K."/>
            <person name="Langford C.J."/>
            <person name="Lawlor S."/>
            <person name="Leongamornlert D.A."/>
            <person name="Lloyd D.M."/>
            <person name="Lloyd C."/>
            <person name="Loveland J.E."/>
            <person name="Lovell J."/>
            <person name="Martin S."/>
            <person name="Mashreghi-Mohammadi M."/>
            <person name="McLaren S.J."/>
            <person name="McMurray A."/>
            <person name="Milne S."/>
            <person name="Moore M.J.F."/>
            <person name="Nickerson T."/>
            <person name="Palmer S.A."/>
            <person name="Pearce A.V."/>
            <person name="Peck A.I."/>
            <person name="Pelan S."/>
            <person name="Phillimore B."/>
            <person name="Porter K.M."/>
            <person name="Rice C.M."/>
            <person name="Searle S."/>
            <person name="Sehra H.K."/>
            <person name="Shownkeen R."/>
            <person name="Skuce C.D."/>
            <person name="Smith M."/>
            <person name="Steward C.A."/>
            <person name="Sycamore N."/>
            <person name="Tester J."/>
            <person name="Thomas D.W."/>
            <person name="Tracey A."/>
            <person name="Tromans A."/>
            <person name="Tubby B."/>
            <person name="Wall M."/>
            <person name="Wallis J.M."/>
            <person name="West A.P."/>
            <person name="Whitehead S.L."/>
            <person name="Willey D.L."/>
            <person name="Wilming L."/>
            <person name="Wray P.W."/>
            <person name="Wright M.W."/>
            <person name="Young L."/>
            <person name="Coulson A."/>
            <person name="Durbin R.M."/>
            <person name="Hubbard T."/>
            <person name="Sulston J.E."/>
            <person name="Beck S."/>
            <person name="Bentley D.R."/>
            <person name="Rogers J."/>
            <person name="Ross M.T."/>
        </authorList>
    </citation>
    <scope>NUCLEOTIDE SEQUENCE [LARGE SCALE GENOMIC DNA]</scope>
</reference>
<reference key="6">
    <citation type="journal article" date="2004" name="Genome Res.">
        <title>The status, quality, and expansion of the NIH full-length cDNA project: the Mammalian Gene Collection (MGC).</title>
        <authorList>
            <consortium name="The MGC Project Team"/>
        </authorList>
    </citation>
    <scope>NUCLEOTIDE SEQUENCE [LARGE SCALE MRNA] (ISOFORM 1)</scope>
    <source>
        <tissue>Mammary gland</tissue>
    </source>
</reference>
<reference key="7">
    <citation type="journal article" date="1995" name="Genomics">
        <title>Chromosomal structure of the human TYRP1 and TYRP2 loci and comparison of the tyrosinase-related protein gene family.</title>
        <authorList>
            <person name="Sturm R.A."/>
            <person name="O'Sullivan B.J."/>
            <person name="Box N.F."/>
            <person name="Smith A.G."/>
            <person name="Smit S.E."/>
            <person name="Puttick E.R.J."/>
            <person name="Parsons P.G."/>
            <person name="Dunn I.S."/>
        </authorList>
    </citation>
    <scope>NUCLEOTIDE SEQUENCE [GENOMIC DNA] OF 1-98</scope>
    <source>
        <tissue>Liver</tissue>
    </source>
</reference>
<reference key="8">
    <citation type="journal article" date="1994" name="J. Biol. Chem.">
        <title>Cloning of the human DOPAchrome tautomerase/tyrosinase-related protein 2 gene and identification of two regulatory regions required for its pigment cell-specific expression.</title>
        <authorList>
            <person name="Yokoyama K."/>
            <person name="Yasumoto K.I."/>
            <person name="Suzuki H."/>
            <person name="Shibahara S."/>
        </authorList>
    </citation>
    <scope>NUCLEOTIDE SEQUENCE [GENOMIC DNA] OF 1-98</scope>
    <source>
        <tissue>Liver</tissue>
    </source>
</reference>
<reference key="9">
    <citation type="journal article" date="2003" name="J. Proteome Res.">
        <title>Proteomic analysis of early melanosomes: identification of novel melanosomal proteins.</title>
        <authorList>
            <person name="Basrur V."/>
            <person name="Yang F."/>
            <person name="Kushimoto T."/>
            <person name="Higashimoto Y."/>
            <person name="Yasumoto K."/>
            <person name="Valencia J."/>
            <person name="Muller J."/>
            <person name="Vieira W.D."/>
            <person name="Watabe H."/>
            <person name="Shabanowitz J."/>
            <person name="Hearing V.J."/>
            <person name="Hunt D.F."/>
            <person name="Appella E."/>
        </authorList>
    </citation>
    <scope>SUBCELLULAR LOCATION [LARGE SCALE ANALYSIS]</scope>
    <source>
        <tissue>Melanoma</tissue>
    </source>
</reference>
<reference key="10">
    <citation type="journal article" date="2006" name="J. Proteome Res.">
        <title>Proteomic and bioinformatic characterization of the biogenesis and function of melanosomes.</title>
        <authorList>
            <person name="Chi A."/>
            <person name="Valencia J.C."/>
            <person name="Hu Z.-Z."/>
            <person name="Watabe H."/>
            <person name="Yamaguchi H."/>
            <person name="Mangini N.J."/>
            <person name="Huang H."/>
            <person name="Canfield V.A."/>
            <person name="Cheng K.C."/>
            <person name="Yang F."/>
            <person name="Abe R."/>
            <person name="Yamagishi S."/>
            <person name="Shabanowitz J."/>
            <person name="Hearing V.J."/>
            <person name="Wu C."/>
            <person name="Appella E."/>
            <person name="Hunt D.F."/>
        </authorList>
    </citation>
    <scope>SUBCELLULAR LOCATION [LARGE SCALE ANALYSIS]</scope>
    <source>
        <tissue>Melanoma</tissue>
    </source>
</reference>
<reference key="11">
    <citation type="journal article" date="2018" name="J. Invest. Dermatol.">
        <title>Melanocytes Sense Blue Light and Regulate Pigmentation through Opsin-3.</title>
        <authorList>
            <person name="Regazzetti C."/>
            <person name="Sormani L."/>
            <person name="Debayle D."/>
            <person name="Bernerd F."/>
            <person name="Tulic M.K."/>
            <person name="De Donatis G.M."/>
            <person name="Chignon-Sicard B."/>
            <person name="Rocchi S."/>
            <person name="Passeron T."/>
        </authorList>
    </citation>
    <scope>INTERACTION WITH TYR</scope>
    <scope>INDUCTION BY BLUE LIGHT</scope>
</reference>
<reference key="12">
    <citation type="journal article" date="2021" name="Genet. Med.">
        <title>Dopachrome tautomerase variants in patients with oculocutaneous albinism.</title>
        <authorList>
            <person name="Pennamen P."/>
            <person name="Tingaud-Sequeira A."/>
            <person name="Gazova I."/>
            <person name="Keighren M."/>
            <person name="McKie L."/>
            <person name="Marlin S."/>
            <person name="Gherbi Halem S."/>
            <person name="Kaplan J."/>
            <person name="Delevoye C."/>
            <person name="Lacombe D."/>
            <person name="Plaisant C."/>
            <person name="Michaud V."/>
            <person name="Lasseaux E."/>
            <person name="Javerzat S."/>
            <person name="Jackson I."/>
            <person name="Arveiler B."/>
        </authorList>
    </citation>
    <scope>VARIANTS OCA8 SER-40 AND TRP-61</scope>
    <scope>FUNCTION</scope>
</reference>
<proteinExistence type="evidence at protein level"/>
<protein>
    <recommendedName>
        <fullName evidence="10">L-dopachrome tautomerase</fullName>
        <shortName>DCT</shortName>
        <shortName>DT</shortName>
        <ecNumber evidence="2">5.3.3.12</ecNumber>
    </recommendedName>
    <alternativeName>
        <fullName>L-dopachrome Delta-isomerase</fullName>
    </alternativeName>
    <alternativeName>
        <fullName>Tyrosinase-related protein 2</fullName>
        <shortName>TRP-2</shortName>
        <shortName>TRP2</shortName>
    </alternativeName>
</protein>
<accession>P40126</accession>
<accession>Q09GT4</accession>
<name>TYRP2_HUMAN</name>
<organism>
    <name type="scientific">Homo sapiens</name>
    <name type="common">Human</name>
    <dbReference type="NCBI Taxonomy" id="9606"/>
    <lineage>
        <taxon>Eukaryota</taxon>
        <taxon>Metazoa</taxon>
        <taxon>Chordata</taxon>
        <taxon>Craniata</taxon>
        <taxon>Vertebrata</taxon>
        <taxon>Euteleostomi</taxon>
        <taxon>Mammalia</taxon>
        <taxon>Eutheria</taxon>
        <taxon>Euarchontoglires</taxon>
        <taxon>Primates</taxon>
        <taxon>Haplorrhini</taxon>
        <taxon>Catarrhini</taxon>
        <taxon>Hominidae</taxon>
        <taxon>Homo</taxon>
    </lineage>
</organism>
<keyword id="KW-0002">3D-structure</keyword>
<keyword id="KW-0015">Albinism</keyword>
<keyword id="KW-0025">Alternative splicing</keyword>
<keyword id="KW-0225">Disease variant</keyword>
<keyword id="KW-0325">Glycoprotein</keyword>
<keyword id="KW-0413">Isomerase</keyword>
<keyword id="KW-0470">Melanin biosynthesis</keyword>
<keyword id="KW-0472">Membrane</keyword>
<keyword id="KW-0479">Metal-binding</keyword>
<keyword id="KW-1267">Proteomics identification</keyword>
<keyword id="KW-1185">Reference proteome</keyword>
<keyword id="KW-0732">Signal</keyword>
<keyword id="KW-0812">Transmembrane</keyword>
<keyword id="KW-1133">Transmembrane helix</keyword>
<keyword id="KW-0862">Zinc</keyword>